<comment type="function">
    <text evidence="1">Cysteine desulfurases mobilize the sulfur from L-cysteine to yield L-alanine, an essential step in sulfur metabolism for biosynthesis of a variety of sulfur-containing biomolecules. Component of the suf operon, which is activated and required under specific conditions such as oxidative stress and iron limitation. Acts as a potent selenocysteine lyase in vitro, that mobilizes selenium from L-selenocysteine. Selenocysteine lyase activity is however unsure in vivo.</text>
</comment>
<comment type="catalytic activity">
    <reaction evidence="1">
        <text>(sulfur carrier)-H + L-cysteine = (sulfur carrier)-SH + L-alanine</text>
        <dbReference type="Rhea" id="RHEA:43892"/>
        <dbReference type="Rhea" id="RHEA-COMP:14737"/>
        <dbReference type="Rhea" id="RHEA-COMP:14739"/>
        <dbReference type="ChEBI" id="CHEBI:29917"/>
        <dbReference type="ChEBI" id="CHEBI:35235"/>
        <dbReference type="ChEBI" id="CHEBI:57972"/>
        <dbReference type="ChEBI" id="CHEBI:64428"/>
        <dbReference type="EC" id="2.8.1.7"/>
    </reaction>
</comment>
<comment type="catalytic activity">
    <reaction evidence="1">
        <text>L-selenocysteine + AH2 = hydrogenselenide + L-alanine + A + H(+)</text>
        <dbReference type="Rhea" id="RHEA:11632"/>
        <dbReference type="ChEBI" id="CHEBI:13193"/>
        <dbReference type="ChEBI" id="CHEBI:15378"/>
        <dbReference type="ChEBI" id="CHEBI:17499"/>
        <dbReference type="ChEBI" id="CHEBI:29317"/>
        <dbReference type="ChEBI" id="CHEBI:57843"/>
        <dbReference type="ChEBI" id="CHEBI:57972"/>
        <dbReference type="EC" id="4.4.1.16"/>
    </reaction>
</comment>
<comment type="cofactor">
    <cofactor evidence="1">
        <name>pyridoxal 5'-phosphate</name>
        <dbReference type="ChEBI" id="CHEBI:597326"/>
    </cofactor>
</comment>
<comment type="pathway">
    <text evidence="1">Cofactor biosynthesis; iron-sulfur cluster biosynthesis.</text>
</comment>
<comment type="subunit">
    <text evidence="1">Homodimer. Interacts with SufE and the SufBCD complex composed of SufB, SufC and SufD. The interaction with SufE is required to mediate the direct transfer of the sulfur atom from the S-sulfanylcysteine.</text>
</comment>
<comment type="subcellular location">
    <subcellularLocation>
        <location evidence="1">Cytoplasm</location>
    </subcellularLocation>
</comment>
<comment type="similarity">
    <text evidence="1">Belongs to the class-V pyridoxal-phosphate-dependent aminotransferase family. Csd subfamily.</text>
</comment>
<dbReference type="EC" id="2.8.1.7" evidence="1"/>
<dbReference type="EC" id="4.4.1.16" evidence="1"/>
<dbReference type="EMBL" id="CP000247">
    <property type="protein sequence ID" value="ABG69630.1"/>
    <property type="molecule type" value="Genomic_DNA"/>
</dbReference>
<dbReference type="RefSeq" id="WP_000144584.1">
    <property type="nucleotide sequence ID" value="NC_008253.1"/>
</dbReference>
<dbReference type="SMR" id="Q0THE9"/>
<dbReference type="KEGG" id="ecp:ECP_1627"/>
<dbReference type="HOGENOM" id="CLU_003433_2_5_6"/>
<dbReference type="UniPathway" id="UPA00266"/>
<dbReference type="Proteomes" id="UP000009182">
    <property type="component" value="Chromosome"/>
</dbReference>
<dbReference type="GO" id="GO:0005737">
    <property type="term" value="C:cytoplasm"/>
    <property type="evidence" value="ECO:0007669"/>
    <property type="project" value="UniProtKB-SubCell"/>
</dbReference>
<dbReference type="GO" id="GO:0031071">
    <property type="term" value="F:cysteine desulfurase activity"/>
    <property type="evidence" value="ECO:0007669"/>
    <property type="project" value="UniProtKB-UniRule"/>
</dbReference>
<dbReference type="GO" id="GO:0030170">
    <property type="term" value="F:pyridoxal phosphate binding"/>
    <property type="evidence" value="ECO:0007669"/>
    <property type="project" value="InterPro"/>
</dbReference>
<dbReference type="GO" id="GO:0009000">
    <property type="term" value="F:selenocysteine lyase activity"/>
    <property type="evidence" value="ECO:0007669"/>
    <property type="project" value="UniProtKB-UniRule"/>
</dbReference>
<dbReference type="GO" id="GO:0006534">
    <property type="term" value="P:cysteine metabolic process"/>
    <property type="evidence" value="ECO:0007669"/>
    <property type="project" value="InterPro"/>
</dbReference>
<dbReference type="CDD" id="cd06453">
    <property type="entry name" value="SufS_like"/>
    <property type="match status" value="1"/>
</dbReference>
<dbReference type="FunFam" id="3.40.640.10:FF:000042">
    <property type="entry name" value="Cysteine desulfurase"/>
    <property type="match status" value="1"/>
</dbReference>
<dbReference type="Gene3D" id="3.90.1150.10">
    <property type="entry name" value="Aspartate Aminotransferase, domain 1"/>
    <property type="match status" value="1"/>
</dbReference>
<dbReference type="Gene3D" id="3.40.640.10">
    <property type="entry name" value="Type I PLP-dependent aspartate aminotransferase-like (Major domain)"/>
    <property type="match status" value="1"/>
</dbReference>
<dbReference type="HAMAP" id="MF_01831">
    <property type="entry name" value="SufS_aminotrans_5"/>
    <property type="match status" value="1"/>
</dbReference>
<dbReference type="InterPro" id="IPR000192">
    <property type="entry name" value="Aminotrans_V_dom"/>
</dbReference>
<dbReference type="InterPro" id="IPR010970">
    <property type="entry name" value="Cys_dSase_SufS"/>
</dbReference>
<dbReference type="InterPro" id="IPR015424">
    <property type="entry name" value="PyrdxlP-dep_Trfase"/>
</dbReference>
<dbReference type="InterPro" id="IPR015421">
    <property type="entry name" value="PyrdxlP-dep_Trfase_major"/>
</dbReference>
<dbReference type="InterPro" id="IPR015422">
    <property type="entry name" value="PyrdxlP-dep_Trfase_small"/>
</dbReference>
<dbReference type="NCBIfam" id="NF006791">
    <property type="entry name" value="PRK09295.1"/>
    <property type="match status" value="1"/>
</dbReference>
<dbReference type="NCBIfam" id="TIGR01979">
    <property type="entry name" value="sufS"/>
    <property type="match status" value="1"/>
</dbReference>
<dbReference type="PANTHER" id="PTHR43586">
    <property type="entry name" value="CYSTEINE DESULFURASE"/>
    <property type="match status" value="1"/>
</dbReference>
<dbReference type="PANTHER" id="PTHR43586:SF25">
    <property type="entry name" value="CYSTEINE DESULFURASE"/>
    <property type="match status" value="1"/>
</dbReference>
<dbReference type="Pfam" id="PF00266">
    <property type="entry name" value="Aminotran_5"/>
    <property type="match status" value="1"/>
</dbReference>
<dbReference type="SUPFAM" id="SSF53383">
    <property type="entry name" value="PLP-dependent transferases"/>
    <property type="match status" value="1"/>
</dbReference>
<gene>
    <name evidence="1" type="primary">sufS</name>
    <name type="ordered locus">ECP_1627</name>
</gene>
<organism>
    <name type="scientific">Escherichia coli O6:K15:H31 (strain 536 / UPEC)</name>
    <dbReference type="NCBI Taxonomy" id="362663"/>
    <lineage>
        <taxon>Bacteria</taxon>
        <taxon>Pseudomonadati</taxon>
        <taxon>Pseudomonadota</taxon>
        <taxon>Gammaproteobacteria</taxon>
        <taxon>Enterobacterales</taxon>
        <taxon>Enterobacteriaceae</taxon>
        <taxon>Escherichia</taxon>
    </lineage>
</organism>
<keyword id="KW-0963">Cytoplasm</keyword>
<keyword id="KW-0456">Lyase</keyword>
<keyword id="KW-0663">Pyridoxal phosphate</keyword>
<keyword id="KW-0808">Transferase</keyword>
<protein>
    <recommendedName>
        <fullName evidence="1">Cysteine desulfurase</fullName>
        <ecNumber evidence="1">2.8.1.7</ecNumber>
    </recommendedName>
    <alternativeName>
        <fullName evidence="1">Selenocysteine beta-lyase</fullName>
        <shortName evidence="1">SCL</shortName>
    </alternativeName>
    <alternativeName>
        <fullName evidence="1">Selenocysteine lyase</fullName>
        <ecNumber evidence="1">4.4.1.16</ecNumber>
    </alternativeName>
    <alternativeName>
        <fullName evidence="1">Selenocysteine reductase</fullName>
    </alternativeName>
</protein>
<reference key="1">
    <citation type="journal article" date="2006" name="Mol. Microbiol.">
        <title>Role of pathogenicity island-associated integrases in the genome plasticity of uropathogenic Escherichia coli strain 536.</title>
        <authorList>
            <person name="Hochhut B."/>
            <person name="Wilde C."/>
            <person name="Balling G."/>
            <person name="Middendorf B."/>
            <person name="Dobrindt U."/>
            <person name="Brzuszkiewicz E."/>
            <person name="Gottschalk G."/>
            <person name="Carniel E."/>
            <person name="Hacker J."/>
        </authorList>
    </citation>
    <scope>NUCLEOTIDE SEQUENCE [LARGE SCALE GENOMIC DNA]</scope>
    <source>
        <strain>536 / UPEC</strain>
    </source>
</reference>
<name>SUFS_ECOL5</name>
<accession>Q0THE9</accession>
<proteinExistence type="inferred from homology"/>
<sequence length="406" mass="44464">MTFSVDKVRADFPVLSREVNGLPLAYLDSAASAQKPSQVIDAEAEFYRHGYAAVHRGIHTLSAQATEKMENVRKRASLFINARSAEELVFVRGTTEGINLVANSWGNSNVRAGDNIIISQMEHHANIVPWQMLCARVGAELRVIPLNPDGTLQLETLPTLFDEKTRLLAITHVSNVLGTENPLAEMITLAHQHGAKVLVDGAQAVMHHPVDVQALDCDFYVFSVHKLYGPTGIGILYVKEALLQEMPPWEGGGSMIATVSLSEGTTWTKAPWRFEAGTPNTGGIIGLGAALEYVSALGLNNIAEYEQNLMHYALSQLESVPDLTLYGPQNRLGVIAFNLGKHHAYDVGSFLDNYGIAVRTGHHCAMPLMAYYNVPAMCRASLAMYNTHEEVDRLVTGLQRIHRLLG</sequence>
<evidence type="ECO:0000255" key="1">
    <source>
        <dbReference type="HAMAP-Rule" id="MF_01831"/>
    </source>
</evidence>
<feature type="chain" id="PRO_1000070423" description="Cysteine desulfurase">
    <location>
        <begin position="1"/>
        <end position="406"/>
    </location>
</feature>
<feature type="active site" description="Cysteine persulfide intermediate" evidence="1">
    <location>
        <position position="364"/>
    </location>
</feature>
<feature type="modified residue" description="N6-(pyridoxal phosphate)lysine" evidence="1">
    <location>
        <position position="226"/>
    </location>
</feature>